<keyword id="KW-1185">Reference proteome</keyword>
<keyword id="KW-0687">Ribonucleoprotein</keyword>
<keyword id="KW-0689">Ribosomal protein</keyword>
<name>RS2_RHORT</name>
<gene>
    <name evidence="1" type="primary">rpsB</name>
    <name type="ordered locus">Rru_A1586</name>
</gene>
<evidence type="ECO:0000255" key="1">
    <source>
        <dbReference type="HAMAP-Rule" id="MF_00291"/>
    </source>
</evidence>
<evidence type="ECO:0000305" key="2"/>
<dbReference type="EMBL" id="CP000230">
    <property type="protein sequence ID" value="ABC22386.1"/>
    <property type="molecule type" value="Genomic_DNA"/>
</dbReference>
<dbReference type="RefSeq" id="WP_011389461.1">
    <property type="nucleotide sequence ID" value="NC_007643.1"/>
</dbReference>
<dbReference type="RefSeq" id="YP_426673.1">
    <property type="nucleotide sequence ID" value="NC_007643.1"/>
</dbReference>
<dbReference type="SMR" id="Q2RU09"/>
<dbReference type="STRING" id="269796.Rru_A1586"/>
<dbReference type="EnsemblBacteria" id="ABC22386">
    <property type="protein sequence ID" value="ABC22386"/>
    <property type="gene ID" value="Rru_A1586"/>
</dbReference>
<dbReference type="KEGG" id="rru:Rru_A1586"/>
<dbReference type="PATRIC" id="fig|269796.9.peg.1660"/>
<dbReference type="eggNOG" id="COG0052">
    <property type="taxonomic scope" value="Bacteria"/>
</dbReference>
<dbReference type="HOGENOM" id="CLU_040318_2_1_5"/>
<dbReference type="PhylomeDB" id="Q2RU09"/>
<dbReference type="Proteomes" id="UP000001929">
    <property type="component" value="Chromosome"/>
</dbReference>
<dbReference type="GO" id="GO:0022627">
    <property type="term" value="C:cytosolic small ribosomal subunit"/>
    <property type="evidence" value="ECO:0007669"/>
    <property type="project" value="TreeGrafter"/>
</dbReference>
<dbReference type="GO" id="GO:0003735">
    <property type="term" value="F:structural constituent of ribosome"/>
    <property type="evidence" value="ECO:0007669"/>
    <property type="project" value="InterPro"/>
</dbReference>
<dbReference type="GO" id="GO:0006412">
    <property type="term" value="P:translation"/>
    <property type="evidence" value="ECO:0007669"/>
    <property type="project" value="UniProtKB-UniRule"/>
</dbReference>
<dbReference type="CDD" id="cd01425">
    <property type="entry name" value="RPS2"/>
    <property type="match status" value="1"/>
</dbReference>
<dbReference type="FunFam" id="1.10.287.610:FF:000001">
    <property type="entry name" value="30S ribosomal protein S2"/>
    <property type="match status" value="1"/>
</dbReference>
<dbReference type="Gene3D" id="3.40.50.10490">
    <property type="entry name" value="Glucose-6-phosphate isomerase like protein, domain 1"/>
    <property type="match status" value="1"/>
</dbReference>
<dbReference type="Gene3D" id="1.10.287.610">
    <property type="entry name" value="Helix hairpin bin"/>
    <property type="match status" value="1"/>
</dbReference>
<dbReference type="HAMAP" id="MF_00291_B">
    <property type="entry name" value="Ribosomal_uS2_B"/>
    <property type="match status" value="1"/>
</dbReference>
<dbReference type="InterPro" id="IPR001865">
    <property type="entry name" value="Ribosomal_uS2"/>
</dbReference>
<dbReference type="InterPro" id="IPR005706">
    <property type="entry name" value="Ribosomal_uS2_bac/mit/plastid"/>
</dbReference>
<dbReference type="InterPro" id="IPR018130">
    <property type="entry name" value="Ribosomal_uS2_CS"/>
</dbReference>
<dbReference type="InterPro" id="IPR023591">
    <property type="entry name" value="Ribosomal_uS2_flav_dom_sf"/>
</dbReference>
<dbReference type="NCBIfam" id="TIGR01011">
    <property type="entry name" value="rpsB_bact"/>
    <property type="match status" value="1"/>
</dbReference>
<dbReference type="PANTHER" id="PTHR12534">
    <property type="entry name" value="30S RIBOSOMAL PROTEIN S2 PROKARYOTIC AND ORGANELLAR"/>
    <property type="match status" value="1"/>
</dbReference>
<dbReference type="PANTHER" id="PTHR12534:SF0">
    <property type="entry name" value="SMALL RIBOSOMAL SUBUNIT PROTEIN US2M"/>
    <property type="match status" value="1"/>
</dbReference>
<dbReference type="Pfam" id="PF00318">
    <property type="entry name" value="Ribosomal_S2"/>
    <property type="match status" value="1"/>
</dbReference>
<dbReference type="PRINTS" id="PR00395">
    <property type="entry name" value="RIBOSOMALS2"/>
</dbReference>
<dbReference type="SUPFAM" id="SSF52313">
    <property type="entry name" value="Ribosomal protein S2"/>
    <property type="match status" value="1"/>
</dbReference>
<dbReference type="PROSITE" id="PS00963">
    <property type="entry name" value="RIBOSOMAL_S2_2"/>
    <property type="match status" value="1"/>
</dbReference>
<proteinExistence type="inferred from homology"/>
<protein>
    <recommendedName>
        <fullName evidence="1">Small ribosomal subunit protein uS2</fullName>
    </recommendedName>
    <alternativeName>
        <fullName evidence="2">30S ribosomal protein S2</fullName>
    </alternativeName>
</protein>
<organism>
    <name type="scientific">Rhodospirillum rubrum (strain ATCC 11170 / ATH 1.1.1 / DSM 467 / LMG 4362 / NCIMB 8255 / S1)</name>
    <dbReference type="NCBI Taxonomy" id="269796"/>
    <lineage>
        <taxon>Bacteria</taxon>
        <taxon>Pseudomonadati</taxon>
        <taxon>Pseudomonadota</taxon>
        <taxon>Alphaproteobacteria</taxon>
        <taxon>Rhodospirillales</taxon>
        <taxon>Rhodospirillaceae</taxon>
        <taxon>Rhodospirillum</taxon>
    </lineage>
</organism>
<comment type="similarity">
    <text evidence="1">Belongs to the universal ribosomal protein uS2 family.</text>
</comment>
<sequence length="262" mass="28546">MALPTFSMRQLIEAGCHFGHNTRRWNPKMAPYLYGQRDNVHIIDLQQTVPMLYRAMQAVRDVTAGGGRVLFVGTKRQAQDVVAEHARRCGQYYVNHRWLGGMLTNWKTISHSIKRLRDLEERFGGGDLLGLTKKEQLNLGREKDKLDMALGGIKEMGGLPDMLFIIDTVKESLAVNEANKLGLPVVAVIDSNSDPRGITYPIPGNDDAIRAIQTYCELISGAAIDGIQAQLGAAGVDVGAAEIVPAETLAAEAPAAEQQPTA</sequence>
<accession>Q2RU09</accession>
<reference key="1">
    <citation type="journal article" date="2011" name="Stand. Genomic Sci.">
        <title>Complete genome sequence of Rhodospirillum rubrum type strain (S1).</title>
        <authorList>
            <person name="Munk A.C."/>
            <person name="Copeland A."/>
            <person name="Lucas S."/>
            <person name="Lapidus A."/>
            <person name="Del Rio T.G."/>
            <person name="Barry K."/>
            <person name="Detter J.C."/>
            <person name="Hammon N."/>
            <person name="Israni S."/>
            <person name="Pitluck S."/>
            <person name="Brettin T."/>
            <person name="Bruce D."/>
            <person name="Han C."/>
            <person name="Tapia R."/>
            <person name="Gilna P."/>
            <person name="Schmutz J."/>
            <person name="Larimer F."/>
            <person name="Land M."/>
            <person name="Kyrpides N.C."/>
            <person name="Mavromatis K."/>
            <person name="Richardson P."/>
            <person name="Rohde M."/>
            <person name="Goeker M."/>
            <person name="Klenk H.P."/>
            <person name="Zhang Y."/>
            <person name="Roberts G.P."/>
            <person name="Reslewic S."/>
            <person name="Schwartz D.C."/>
        </authorList>
    </citation>
    <scope>NUCLEOTIDE SEQUENCE [LARGE SCALE GENOMIC DNA]</scope>
    <source>
        <strain>ATCC 11170 / ATH 1.1.1 / DSM 467 / LMG 4362 / NCIMB 8255 / S1</strain>
    </source>
</reference>
<feature type="chain" id="PRO_1000004050" description="Small ribosomal subunit protein uS2">
    <location>
        <begin position="1"/>
        <end position="262"/>
    </location>
</feature>